<reference key="1">
    <citation type="journal article" date="2015" name="Genome Announc.">
        <title>Draft genome sequence of the fungus Penicillium brasilianum MG11.</title>
        <authorList>
            <person name="Horn F."/>
            <person name="Linde J."/>
            <person name="Mattern D.J."/>
            <person name="Walther G."/>
            <person name="Guthke R."/>
            <person name="Brakhage A.A."/>
            <person name="Valiante V."/>
        </authorList>
    </citation>
    <scope>NUCLEOTIDE SEQUENCE [LARGE SCALE GENOMIC DNA]</scope>
    <source>
        <strain>MG11</strain>
    </source>
</reference>
<reference key="2">
    <citation type="journal article" date="2016" name="J. Am. Chem. Soc.">
        <title>Discovery of key dioxygenases that diverged the paraherquonin and acetoxydehydroaustin pathways in Penicillium brasilianum.</title>
        <authorList>
            <person name="Matsuda Y."/>
            <person name="Iwabuchi T."/>
            <person name="Fujimoto T."/>
            <person name="Awakawa T."/>
            <person name="Nakashima Y."/>
            <person name="Mori T."/>
            <person name="Zhang H."/>
            <person name="Hayashi F."/>
            <person name="Abe I."/>
        </authorList>
    </citation>
    <scope>FUNCTION</scope>
</reference>
<reference key="3">
    <citation type="journal article" date="2017" name="ACS Chem. Biol.">
        <title>Rewiring of the austinoid biosynthetic pathway in filamentous fungi.</title>
        <authorList>
            <person name="Mattern D.J."/>
            <person name="Valiante V."/>
            <person name="Horn F."/>
            <person name="Petzke L."/>
            <person name="Brakhage A.A."/>
        </authorList>
    </citation>
    <scope>FUNCTION</scope>
</reference>
<dbReference type="EC" id="2.3.1.-" evidence="10"/>
<dbReference type="EMBL" id="CDHK01000010">
    <property type="protein sequence ID" value="CEJ61321.1"/>
    <property type="status" value="ALT_SEQ"/>
    <property type="molecule type" value="Genomic_DNA"/>
</dbReference>
<dbReference type="EMBL" id="CDHK01000010">
    <property type="protein sequence ID" value="CEJ61320.1"/>
    <property type="molecule type" value="Genomic_DNA"/>
</dbReference>
<dbReference type="SMR" id="A0A0F7U103"/>
<dbReference type="STRING" id="104259.A0A0F7U103"/>
<dbReference type="ESTHER" id="penbi-ausa">
    <property type="family name" value="BD-FAE"/>
</dbReference>
<dbReference type="OrthoDB" id="429813at2759"/>
<dbReference type="UniPathway" id="UPA00213"/>
<dbReference type="Proteomes" id="UP000042958">
    <property type="component" value="Unassembled WGS sequence"/>
</dbReference>
<dbReference type="GO" id="GO:0004315">
    <property type="term" value="F:3-oxoacyl-[acyl-carrier-protein] synthase activity"/>
    <property type="evidence" value="ECO:0007669"/>
    <property type="project" value="InterPro"/>
</dbReference>
<dbReference type="GO" id="GO:0004312">
    <property type="term" value="F:fatty acid synthase activity"/>
    <property type="evidence" value="ECO:0007669"/>
    <property type="project" value="TreeGrafter"/>
</dbReference>
<dbReference type="GO" id="GO:0008168">
    <property type="term" value="F:methyltransferase activity"/>
    <property type="evidence" value="ECO:0007669"/>
    <property type="project" value="UniProtKB-KW"/>
</dbReference>
<dbReference type="GO" id="GO:0008236">
    <property type="term" value="F:serine-type peptidase activity"/>
    <property type="evidence" value="ECO:0007669"/>
    <property type="project" value="InterPro"/>
</dbReference>
<dbReference type="GO" id="GO:0017000">
    <property type="term" value="P:antibiotic biosynthetic process"/>
    <property type="evidence" value="ECO:0007669"/>
    <property type="project" value="UniProtKB-ARBA"/>
</dbReference>
<dbReference type="GO" id="GO:0006633">
    <property type="term" value="P:fatty acid biosynthetic process"/>
    <property type="evidence" value="ECO:0007669"/>
    <property type="project" value="InterPro"/>
</dbReference>
<dbReference type="GO" id="GO:0032259">
    <property type="term" value="P:methylation"/>
    <property type="evidence" value="ECO:0007669"/>
    <property type="project" value="UniProtKB-KW"/>
</dbReference>
<dbReference type="GO" id="GO:0030639">
    <property type="term" value="P:polyketide biosynthetic process"/>
    <property type="evidence" value="ECO:0007669"/>
    <property type="project" value="UniProtKB-ARBA"/>
</dbReference>
<dbReference type="GO" id="GO:0006508">
    <property type="term" value="P:proteolysis"/>
    <property type="evidence" value="ECO:0007669"/>
    <property type="project" value="InterPro"/>
</dbReference>
<dbReference type="GO" id="GO:0016114">
    <property type="term" value="P:terpenoid biosynthetic process"/>
    <property type="evidence" value="ECO:0007669"/>
    <property type="project" value="UniProtKB-UniPathway"/>
</dbReference>
<dbReference type="GO" id="GO:0009403">
    <property type="term" value="P:toxin biosynthetic process"/>
    <property type="evidence" value="ECO:0007669"/>
    <property type="project" value="UniProtKB-ARBA"/>
</dbReference>
<dbReference type="CDD" id="cd02440">
    <property type="entry name" value="AdoMet_MTases"/>
    <property type="match status" value="1"/>
</dbReference>
<dbReference type="CDD" id="cd00833">
    <property type="entry name" value="PKS"/>
    <property type="match status" value="1"/>
</dbReference>
<dbReference type="Gene3D" id="3.30.70.3290">
    <property type="match status" value="1"/>
</dbReference>
<dbReference type="Gene3D" id="3.40.47.10">
    <property type="match status" value="1"/>
</dbReference>
<dbReference type="Gene3D" id="1.10.1200.10">
    <property type="entry name" value="ACP-like"/>
    <property type="match status" value="1"/>
</dbReference>
<dbReference type="Gene3D" id="3.40.50.1820">
    <property type="entry name" value="alpha/beta hydrolase"/>
    <property type="match status" value="1"/>
</dbReference>
<dbReference type="Gene3D" id="3.40.366.10">
    <property type="entry name" value="Malonyl-Coenzyme A Acyl Carrier Protein, domain 2"/>
    <property type="match status" value="2"/>
</dbReference>
<dbReference type="Gene3D" id="3.10.129.110">
    <property type="entry name" value="Polyketide synthase dehydratase"/>
    <property type="match status" value="1"/>
</dbReference>
<dbReference type="Gene3D" id="3.40.50.150">
    <property type="entry name" value="Vaccinia Virus protein VP39"/>
    <property type="match status" value="1"/>
</dbReference>
<dbReference type="InterPro" id="IPR013094">
    <property type="entry name" value="AB_hydrolase_3"/>
</dbReference>
<dbReference type="InterPro" id="IPR029058">
    <property type="entry name" value="AB_hydrolase_fold"/>
</dbReference>
<dbReference type="InterPro" id="IPR001227">
    <property type="entry name" value="Ac_transferase_dom_sf"/>
</dbReference>
<dbReference type="InterPro" id="IPR036736">
    <property type="entry name" value="ACP-like_sf"/>
</dbReference>
<dbReference type="InterPro" id="IPR014043">
    <property type="entry name" value="Acyl_transferase_dom"/>
</dbReference>
<dbReference type="InterPro" id="IPR016035">
    <property type="entry name" value="Acyl_Trfase/lysoPLipase"/>
</dbReference>
<dbReference type="InterPro" id="IPR018201">
    <property type="entry name" value="Ketoacyl_synth_AS"/>
</dbReference>
<dbReference type="InterPro" id="IPR014031">
    <property type="entry name" value="Ketoacyl_synth_C"/>
</dbReference>
<dbReference type="InterPro" id="IPR014030">
    <property type="entry name" value="Ketoacyl_synth_N"/>
</dbReference>
<dbReference type="InterPro" id="IPR016036">
    <property type="entry name" value="Malonyl_transacylase_ACP-bd"/>
</dbReference>
<dbReference type="InterPro" id="IPR013217">
    <property type="entry name" value="Methyltransf_12"/>
</dbReference>
<dbReference type="InterPro" id="IPR001375">
    <property type="entry name" value="Peptidase_S9_cat"/>
</dbReference>
<dbReference type="InterPro" id="IPR020841">
    <property type="entry name" value="PKS_Beta-ketoAc_synthase_dom"/>
</dbReference>
<dbReference type="InterPro" id="IPR042104">
    <property type="entry name" value="PKS_dehydratase_sf"/>
</dbReference>
<dbReference type="InterPro" id="IPR049551">
    <property type="entry name" value="PKS_DH_C"/>
</dbReference>
<dbReference type="InterPro" id="IPR049900">
    <property type="entry name" value="PKS_mFAS_DH"/>
</dbReference>
<dbReference type="InterPro" id="IPR050091">
    <property type="entry name" value="PKS_NRPS_Biosynth_Enz"/>
</dbReference>
<dbReference type="InterPro" id="IPR009081">
    <property type="entry name" value="PP-bd_ACP"/>
</dbReference>
<dbReference type="InterPro" id="IPR029063">
    <property type="entry name" value="SAM-dependent_MTases_sf"/>
</dbReference>
<dbReference type="InterPro" id="IPR016039">
    <property type="entry name" value="Thiolase-like"/>
</dbReference>
<dbReference type="PANTHER" id="PTHR43775">
    <property type="entry name" value="FATTY ACID SYNTHASE"/>
    <property type="match status" value="1"/>
</dbReference>
<dbReference type="PANTHER" id="PTHR43775:SF21">
    <property type="entry name" value="NON-REDUCING POLYKETIDE SYNTHASE AUSA-RELATED"/>
    <property type="match status" value="1"/>
</dbReference>
<dbReference type="Pfam" id="PF07859">
    <property type="entry name" value="Abhydrolase_3"/>
    <property type="match status" value="1"/>
</dbReference>
<dbReference type="Pfam" id="PF00698">
    <property type="entry name" value="Acyl_transf_1"/>
    <property type="match status" value="1"/>
</dbReference>
<dbReference type="Pfam" id="PF18558">
    <property type="entry name" value="HTH_51"/>
    <property type="match status" value="1"/>
</dbReference>
<dbReference type="Pfam" id="PF00109">
    <property type="entry name" value="ketoacyl-synt"/>
    <property type="match status" value="1"/>
</dbReference>
<dbReference type="Pfam" id="PF02801">
    <property type="entry name" value="Ketoacyl-synt_C"/>
    <property type="match status" value="1"/>
</dbReference>
<dbReference type="Pfam" id="PF08242">
    <property type="entry name" value="Methyltransf_12"/>
    <property type="match status" value="1"/>
</dbReference>
<dbReference type="Pfam" id="PF00326">
    <property type="entry name" value="Peptidase_S9"/>
    <property type="match status" value="1"/>
</dbReference>
<dbReference type="Pfam" id="PF00550">
    <property type="entry name" value="PP-binding"/>
    <property type="match status" value="1"/>
</dbReference>
<dbReference type="Pfam" id="PF14765">
    <property type="entry name" value="PS-DH"/>
    <property type="match status" value="1"/>
</dbReference>
<dbReference type="SMART" id="SM00827">
    <property type="entry name" value="PKS_AT"/>
    <property type="match status" value="1"/>
</dbReference>
<dbReference type="SMART" id="SM00825">
    <property type="entry name" value="PKS_KS"/>
    <property type="match status" value="1"/>
</dbReference>
<dbReference type="SUPFAM" id="SSF47336">
    <property type="entry name" value="ACP-like"/>
    <property type="match status" value="1"/>
</dbReference>
<dbReference type="SUPFAM" id="SSF53474">
    <property type="entry name" value="alpha/beta-Hydrolases"/>
    <property type="match status" value="1"/>
</dbReference>
<dbReference type="SUPFAM" id="SSF52151">
    <property type="entry name" value="FabD/lysophospholipase-like"/>
    <property type="match status" value="1"/>
</dbReference>
<dbReference type="SUPFAM" id="SSF55048">
    <property type="entry name" value="Probable ACP-binding domain of malonyl-CoA ACP transacylase"/>
    <property type="match status" value="1"/>
</dbReference>
<dbReference type="SUPFAM" id="SSF53335">
    <property type="entry name" value="S-adenosyl-L-methionine-dependent methyltransferases"/>
    <property type="match status" value="1"/>
</dbReference>
<dbReference type="SUPFAM" id="SSF53901">
    <property type="entry name" value="Thiolase-like"/>
    <property type="match status" value="1"/>
</dbReference>
<dbReference type="PROSITE" id="PS50075">
    <property type="entry name" value="CARRIER"/>
    <property type="match status" value="1"/>
</dbReference>
<dbReference type="PROSITE" id="PS00606">
    <property type="entry name" value="KS3_1"/>
    <property type="match status" value="1"/>
</dbReference>
<dbReference type="PROSITE" id="PS52004">
    <property type="entry name" value="KS3_2"/>
    <property type="match status" value="1"/>
</dbReference>
<dbReference type="PROSITE" id="PS52019">
    <property type="entry name" value="PKS_MFAS_DH"/>
    <property type="match status" value="1"/>
</dbReference>
<organism>
    <name type="scientific">Penicillium brasilianum</name>
    <dbReference type="NCBI Taxonomy" id="104259"/>
    <lineage>
        <taxon>Eukaryota</taxon>
        <taxon>Fungi</taxon>
        <taxon>Dikarya</taxon>
        <taxon>Ascomycota</taxon>
        <taxon>Pezizomycotina</taxon>
        <taxon>Eurotiomycetes</taxon>
        <taxon>Eurotiomycetidae</taxon>
        <taxon>Eurotiales</taxon>
        <taxon>Aspergillaceae</taxon>
        <taxon>Penicillium</taxon>
    </lineage>
</organism>
<sequence length="2475" mass="269648">MGSLGDLPLNRISVLFGSKYSEIDRSALHIRRYLSTHRAATWLEDAVEDLPSVWQDVTKVWPAGEGIHGEAGLQQLSAFLRGEELPLNMEDPMNYLLMPITVLRHLVDFHEFKEAGSDCDIKSMQGFCAGYLAAVAGCWEKDQSEFSKVVATMVRTAIFIGAAVDLDELATQRATSIAVRWKTAEAYKPFAATLGRYPGAYIACITDESSVTVTVWEDQAAALVQELEGNGLLVKDTRLRGRFHHADHLSAAQDILKLCQQDTRFQLPNTCPARELPRSNADGDLPTLKSVLSVVIQSILISQADWNLTVSNTLNSLDSSDAKCILSIGAGQFLPRQARSQILNAIDSSRGDNLVNGDHDNIAITNGTSFAASSVNGTAPVPTSIPIAVTGLACRYPQADCVEELWKILEQGLCTVSRMPESRLKPDRLQRKPDGPFWGNFISRPDAFDHRFFKISAREAESMDPQQRLLLQVAYEAMESAGYCGLRATNLPEDVGCYVGVGTEDYSENVGSRNATAFSATGTLQAFNSGRVSHHFGWTGPSVTVDTACSSAAVAIHLACQALQTSDCSVAVAGGVNVMTDPRWSQNLAAASFLSPTGASKAFDTNANGYCRGEGAGLVVLRPLEAALRDGDPIHAVITGTSVNQGANCSPITVPDSNSQRSLYMKALSLSGLKPEVVSYVEAHGTGTQVGDPIEFESIRKTFAVPSRTERLYVGSIKDNIGHTETSSGVAGLLKTILMLQKGKIPKQANFTQLNPKIIVNQEDQMSIPTSLIRWETQKRVAMVTNYGAAGSNAAIVLKEPIPTPTALCSDEKERLLSAVPFFVAAQTEESLREYCQALKARLLNGAHLESIAVQDLAFNLARKQNRSMEFSVSFTNSSSVTELRERLDDVISGRMNIVKKTHTSNPVVLCFGGQTGNKASISESLVASSALIRLHLDECESACKALGLPSLFPAIFDSSPNKDIVNLHCVLFSIQYATAKAWIDSGLEVDRMIGHSFGQLTAVCVAGGLSLIDTMRLISTRAHLIRSEWTSEIGVMLSLKGEKNAVRDLLDSVPDSADLACVNGADSFVAAGSEVAIHEIEKNAAERGIKSQRLDNTHAFHSRLVDPILPGLAKVASSLNYKPLRIPVEACSESKEDWMLPTWEKIVQHSRKPVYFHQAVHRTISRIQGPAIWLEAGTMSPIIGMVRRAVDTPSSARGHVFCPMDLSGPQAESNLAKVTSSLWSNGVPVQFWPFHGSQRGYQWINLPPYQFAKTSHWIEYDPTAFSYQMSKQEKPPIEDLKLVQLLKNEGKVSLFRINDNDPMFRMCTAGHAVVEQNLCPASLYFELVVRAAITTLPKGTDPTMYHLADLNISAPLVLDMPGSVLLELTQRDSTPGQWTFVLFTREDTLQSVTHATGTISLSPGADNTGISSRFSSLKRLLNPAHWDSIATSPSSSGLKRSTVYQAFRRAVTYAEYYRGVESVYALGHEATGRVHLPSSPTKNSPCDPILIDNFLQVAGIHVNCLSETHDDEVFVCSSVGDVIIGESFVKRDPSVAAPWVVYSNYEQESKKKALCDVFVVDEATGSLALCVLAATFTSVSIQSLRRTLTRLTNKGVSPVPVDIAVAAEVTPAVPAASSITATRASSNGDDLRTVQAMLSELLGIPTSEIPASASLADVGVDSLMNTEVLSEIKNRFQVVITKSELTAIEDVGALVQRIFPGRSTVHIENHDQPAVGITAINGGSKPSSGGPVPASKVGDDLSGFADKAGELFTASRKSNEHSEATKFLGFCDTVFPQQMELVTAYVVEAFKVLGVDLQSLKAGQPIPSVDILPQHGQVMNQLYAVLEYSGLVDRSGTSICRGHCEVNQDATAVLHQKILNDHPQHTSEHKLLHTTGPRLADCLTGAADPLSLLFQDAQARALMQDVYSNAPMFKSATMHLAQYLKNLLRQVNSPRPIKILEIGAGTGGTTDYLLKQLSSVAGLRFEYTFTDISPSLVTLARKRFKTFNFIHYQTLDIEKGPASEMLGQYDIIVSSNCIHATRSLSTSCSNIQKLLRPHGILCLIELTRNLFWFDLVFGLLEGWWLFNDGRSHALAHESFWDQTLRSSGFNWVDWTDNQSEESNILRLIVASPTRPALSLEATTESSAIHEETVVYGRKDGLDLLADIHYPQILDSEGKNRPVALLIHGGGHIMLSRKDVRPPQVKLLIDMGFLPVSIDYRLCPEVSLLEGPMADACEALAWAQNTLPQLNLQRPDIRPDGNNVVAVGWSSGGHLAMTLAWTAPARGLRAPEAVLSFYCATDYTDPFWTKPNFPYQGDVSIEDVPTQSPFLGINDRAITSYNPAPRKRALGGWMSPTDPRSRIALHMNWTGQTLTVLFNGHKYKSLVAIAGGDDNVILPKPTLSEIQKACPLSHVYAGQYKTPTFIIHGTLDDLIPVEQSQRTHDQMLANGVESELRVVADAPHLFDMSPNLKNNKDACRAVADGYEFLRSHVGL</sequence>
<protein>
    <recommendedName>
        <fullName evidence="8">Non-reducing polyketide synthase ausA</fullName>
        <ecNumber evidence="10">2.3.1.-</ecNumber>
    </recommendedName>
    <alternativeName>
        <fullName evidence="8">Austinoid biosynthesis clusters protein A</fullName>
    </alternativeName>
</protein>
<evidence type="ECO:0000250" key="1">
    <source>
        <dbReference type="UniProtKB" id="Q5ATJ7"/>
    </source>
</evidence>
<evidence type="ECO:0000255" key="2"/>
<evidence type="ECO:0000255" key="3">
    <source>
        <dbReference type="PROSITE-ProRule" id="PRU00258"/>
    </source>
</evidence>
<evidence type="ECO:0000255" key="4">
    <source>
        <dbReference type="PROSITE-ProRule" id="PRU01348"/>
    </source>
</evidence>
<evidence type="ECO:0000255" key="5">
    <source>
        <dbReference type="PROSITE-ProRule" id="PRU01363"/>
    </source>
</evidence>
<evidence type="ECO:0000255" key="6">
    <source>
        <dbReference type="PROSITE-ProRule" id="PRU10022"/>
    </source>
</evidence>
<evidence type="ECO:0000269" key="7">
    <source>
    </source>
</evidence>
<evidence type="ECO:0000303" key="8">
    <source>
    </source>
</evidence>
<evidence type="ECO:0000305" key="9"/>
<evidence type="ECO:0000305" key="10">
    <source>
    </source>
</evidence>
<proteinExistence type="inferred from homology"/>
<accession>A0A0F7U103</accession>
<accession>A0A0F7TZE3</accession>
<gene>
    <name evidence="8" type="primary">ausA</name>
    <name type="ORF">PMG11_09856</name>
</gene>
<name>AUSA_PENBI</name>
<feature type="chain" id="PRO_0000453845" description="Non-reducing polyketide synthase ausA">
    <location>
        <begin position="1"/>
        <end position="2475"/>
    </location>
</feature>
<feature type="domain" description="Ketosynthase family 3 (KS3)" evidence="4">
    <location>
        <begin position="384"/>
        <end position="800"/>
    </location>
</feature>
<feature type="domain" description="PKS/mFAS DH" evidence="5">
    <location>
        <begin position="1279"/>
        <end position="1586"/>
    </location>
</feature>
<feature type="domain" description="Carrier" evidence="3">
    <location>
        <begin position="1626"/>
        <end position="1703"/>
    </location>
</feature>
<feature type="region of interest" description="N-terminal acylcarrier protein transacylase domain (SAT)" evidence="2">
    <location>
        <begin position="14"/>
        <end position="253"/>
    </location>
</feature>
<feature type="region of interest" description="Malonyl-CoA:ACP transacylase (MAT) domain" evidence="2">
    <location>
        <begin position="910"/>
        <end position="1212"/>
    </location>
</feature>
<feature type="region of interest" description="N-terminal hotdog fold" evidence="5">
    <location>
        <begin position="1279"/>
        <end position="1407"/>
    </location>
</feature>
<feature type="region of interest" description="Product template (PT) domain" evidence="2">
    <location>
        <begin position="1282"/>
        <end position="1585"/>
    </location>
</feature>
<feature type="region of interest" description="C-terminal hotdog fold" evidence="5">
    <location>
        <begin position="1435"/>
        <end position="1586"/>
    </location>
</feature>
<feature type="region of interest" description="Methyltransferase (CMeT) domain" evidence="2">
    <location>
        <begin position="1865"/>
        <end position="2098"/>
    </location>
</feature>
<feature type="region of interest" description="Thioesterase (TE) domain" evidence="1">
    <location>
        <begin position="2127"/>
        <end position="2475"/>
    </location>
</feature>
<feature type="active site" description="For beta-ketoacyl synthase activity" evidence="4">
    <location>
        <position position="549"/>
    </location>
</feature>
<feature type="active site" description="For beta-ketoacyl synthase activity" evidence="4">
    <location>
        <position position="684"/>
    </location>
</feature>
<feature type="active site" description="For beta-ketoacyl synthase activity" evidence="4">
    <location>
        <position position="723"/>
    </location>
</feature>
<feature type="active site" description="For acyl/malonyl transferase activity" evidence="6">
    <location>
        <position position="997"/>
    </location>
</feature>
<feature type="active site" description="Proton acceptor; for dehydratase activity" evidence="5">
    <location>
        <position position="1312"/>
    </location>
</feature>
<feature type="active site" description="Proton donor; for dehydratase activity" evidence="5">
    <location>
        <position position="1493"/>
    </location>
</feature>
<feature type="active site" description="For thioesterase activity" evidence="1">
    <location>
        <position position="2250"/>
    </location>
</feature>
<feature type="active site" description="For thioesterase activity" evidence="1">
    <location>
        <position position="2412"/>
    </location>
</feature>
<feature type="active site" description="For thioesterase activity" evidence="1">
    <location>
        <position position="2444"/>
    </location>
</feature>
<feature type="modified residue" description="O-(pantetheine 4'-phosphoryl)serine" evidence="3">
    <location>
        <position position="1663"/>
    </location>
</feature>
<keyword id="KW-0489">Methyltransferase</keyword>
<keyword id="KW-0511">Multifunctional enzyme</keyword>
<keyword id="KW-0596">Phosphopantetheine</keyword>
<keyword id="KW-0597">Phosphoprotein</keyword>
<keyword id="KW-1185">Reference proteome</keyword>
<keyword id="KW-0808">Transferase</keyword>
<comment type="function">
    <text evidence="1 7">Non-reducing polyketide synthase; part of the gene cluster A that mediates the biosynthesis of the fungal meroterpenoid acetoxydehydroaustin (PubMed:29076725). The first step of the pathway is the synthesis of 3,5-dimethylorsellinic acid by the polyketide synthase ausA (By similarity). 3,5-dimethylorsellinic acid is then prenylated by the polyprenyl transferase ausN (By similarity). Further epoxidation by the FAD-dependent monooxygenase ausM and cyclization by the probable terpene cyclase ausL lead to the formation of protoaustinoid A (By similarity). Protoaustinoid A is then oxidized to spiro-lactone preaustinoid A3 by the combined action of the FAD-binding monooxygenases ausB and ausC, and the dioxygenase ausE (By similarity). Acid-catalyzed keto-rearrangement and ring contraction of the tetraketide portion of preaustinoid A3 by ausJ lead to the formation of preaustinoid A4 (By similarity). The aldo-keto reductase ausK, with the help of ausH, is involved in the next step by transforming preaustinoid A4 into isoaustinone which is in turn hydroxylated by the P450 monooxygenase ausI to form austinolide (By similarity). The cytochrome P450 monooxygenase ausG then modifies austinolide to austinol (By similarity). Austinol is further acetylated to austin by the O-acetyltransferase ausP, which spontaneously changes to dehydroaustin (PubMed:29076725). The cytochrome P450 monooxygenase then converts dehydroaustin is into 7-dehydrodehydroaustin (PubMed:29076725). The hydroxylation catalyzed by ausR permits the second O-acetyltransferase ausQ to add an additional acetyl group to the molecule, leading to the formation of acetoxydehydroaustin (PubMed:29076725). Due to genetic rearrangements of the clusters and the subsequent loss of some enzymes, the end product of the Penicillium brasilianum austinoid biosynthesis clusters is acetoxydehydroaustin (PubMed:29076725).</text>
</comment>
<comment type="catalytic activity">
    <reaction evidence="1">
        <text>3 malonyl-CoA + acetyl-CoA + 2 S-adenosyl-L-methionine = 3,5-dimethylorsellinate + 2 S-adenosyl-L-homocysteine + 3 CO2 + 4 CoA</text>
        <dbReference type="Rhea" id="RHEA:49628"/>
        <dbReference type="ChEBI" id="CHEBI:16526"/>
        <dbReference type="ChEBI" id="CHEBI:57287"/>
        <dbReference type="ChEBI" id="CHEBI:57288"/>
        <dbReference type="ChEBI" id="CHEBI:57384"/>
        <dbReference type="ChEBI" id="CHEBI:57856"/>
        <dbReference type="ChEBI" id="CHEBI:59789"/>
        <dbReference type="ChEBI" id="CHEBI:131856"/>
    </reaction>
    <physiologicalReaction direction="left-to-right" evidence="1">
        <dbReference type="Rhea" id="RHEA:49629"/>
    </physiologicalReaction>
</comment>
<comment type="pathway">
    <text evidence="10">Secondary metabolite biosynthesis; terpenoid biosynthesis.</text>
</comment>
<comment type="domain">
    <text evidence="1">Multidomain protein; including a starter unit:ACP transacylase (SAT) that selects the starter unit; a ketosynthase (KS) that catalyzes repeated decarboxylative condensation to elongate the polyketide backbone; a malonyl-CoA:ACP transacylase (MAT) that selects and transfers the extender unit malonyl-CoA; a product template (PT) domain that controls the immediate cyclization regioselectivity of the reactive polyketide backbone; and an acyl-carrier protein (ACP) that serves as the tether of the growing and completed polyketide via its phosphopantetheinyl arm.</text>
</comment>
<comment type="domain">
    <text evidence="1">The release of the polyketide chain from the non-reducing polyketide synthase is mediated by the thioesterase (TE) domain localized at the C-terminus of the protein.</text>
</comment>
<comment type="miscellaneous">
    <text evidence="10">In A.calidoustus, the austinoid gene cluster lies on a contiguous DNA region, while clusters from E.nidulans and P.brasilianum are split in their respective genomes. Genetic rearrangements provoked variability among the clusters and E.nidulans produces the least number of austionoid derivatives with the end products austinol and dehydroaustinol, while P.brasilianum can produce until acetoxydehydroaustin, and A.calidoustus produces the highest number of identified derivatives.</text>
</comment>
<comment type="sequence caution" evidence="9">
    <conflict type="erroneous gene model prediction">
        <sequence resource="EMBL-CDS" id="CEJ61321"/>
    </conflict>
</comment>